<proteinExistence type="inferred from homology"/>
<protein>
    <recommendedName>
        <fullName>DNA replication complex GINS protein SLD5</fullName>
    </recommendedName>
</protein>
<feature type="chain" id="PRO_0000255430" description="DNA replication complex GINS protein SLD5">
    <location>
        <begin position="1"/>
        <end position="221"/>
    </location>
</feature>
<gene>
    <name type="primary">SLD5</name>
    <name type="ORF">CHGG_01483</name>
</gene>
<accession>Q2HE71</accession>
<sequence length="221" mass="25295">MDIDDILREVDPTFHSIPQEKRDLQELTRAWIAERSAPELLAWPADGLFERINDNIKQQIEKVEEMTGDMDPKTNFALIVIQTELERYRYLVRSYLRARIAKIDRHTLHYLSTDDLRARLSEMELAYATRHQALLHNHYLSSFLSSFPANLQNLNDAAAGISMIETPDLESAVFIRALKDTPVEARGVDTDAYADLKESDIVILRWADAKKLVEAGTAELV</sequence>
<organism>
    <name type="scientific">Chaetomium globosum (strain ATCC 6205 / CBS 148.51 / DSM 1962 / NBRC 6347 / NRRL 1970)</name>
    <name type="common">Soil fungus</name>
    <dbReference type="NCBI Taxonomy" id="306901"/>
    <lineage>
        <taxon>Eukaryota</taxon>
        <taxon>Fungi</taxon>
        <taxon>Dikarya</taxon>
        <taxon>Ascomycota</taxon>
        <taxon>Pezizomycotina</taxon>
        <taxon>Sordariomycetes</taxon>
        <taxon>Sordariomycetidae</taxon>
        <taxon>Sordariales</taxon>
        <taxon>Chaetomiaceae</taxon>
        <taxon>Chaetomium</taxon>
    </lineage>
</organism>
<dbReference type="EMBL" id="CH408029">
    <property type="protein sequence ID" value="EAQ93248.1"/>
    <property type="molecule type" value="Genomic_DNA"/>
</dbReference>
<dbReference type="RefSeq" id="XP_001220704.1">
    <property type="nucleotide sequence ID" value="XM_001220703.1"/>
</dbReference>
<dbReference type="SMR" id="Q2HE71"/>
<dbReference type="FunCoup" id="Q2HE71">
    <property type="interactions" value="575"/>
</dbReference>
<dbReference type="STRING" id="306901.Q2HE71"/>
<dbReference type="GeneID" id="4387461"/>
<dbReference type="VEuPathDB" id="FungiDB:CHGG_01483"/>
<dbReference type="eggNOG" id="KOG3176">
    <property type="taxonomic scope" value="Eukaryota"/>
</dbReference>
<dbReference type="HOGENOM" id="CLU_071893_1_1_1"/>
<dbReference type="InParanoid" id="Q2HE71"/>
<dbReference type="OMA" id="ILETAWI"/>
<dbReference type="OrthoDB" id="338231at2759"/>
<dbReference type="Proteomes" id="UP000001056">
    <property type="component" value="Unassembled WGS sequence"/>
</dbReference>
<dbReference type="GO" id="GO:0000811">
    <property type="term" value="C:GINS complex"/>
    <property type="evidence" value="ECO:0007669"/>
    <property type="project" value="TreeGrafter"/>
</dbReference>
<dbReference type="GO" id="GO:0007059">
    <property type="term" value="P:chromosome segregation"/>
    <property type="evidence" value="ECO:0007669"/>
    <property type="project" value="UniProtKB-KW"/>
</dbReference>
<dbReference type="GO" id="GO:0006261">
    <property type="term" value="P:DNA-templated DNA replication"/>
    <property type="evidence" value="ECO:0007669"/>
    <property type="project" value="InterPro"/>
</dbReference>
<dbReference type="GO" id="GO:0000727">
    <property type="term" value="P:double-strand break repair via break-induced replication"/>
    <property type="evidence" value="ECO:0007669"/>
    <property type="project" value="TreeGrafter"/>
</dbReference>
<dbReference type="CDD" id="cd11711">
    <property type="entry name" value="GINS_A_Sld5"/>
    <property type="match status" value="1"/>
</dbReference>
<dbReference type="CDD" id="cd21692">
    <property type="entry name" value="GINS_B_Sld5"/>
    <property type="match status" value="1"/>
</dbReference>
<dbReference type="FunFam" id="1.20.58.1030:FF:000006">
    <property type="entry name" value="DNA replication complex GINS protein SLD5"/>
    <property type="match status" value="1"/>
</dbReference>
<dbReference type="Gene3D" id="1.20.58.1030">
    <property type="match status" value="1"/>
</dbReference>
<dbReference type="Gene3D" id="3.40.5.60">
    <property type="match status" value="1"/>
</dbReference>
<dbReference type="InterPro" id="IPR021151">
    <property type="entry name" value="GINS_A"/>
</dbReference>
<dbReference type="InterPro" id="IPR036224">
    <property type="entry name" value="GINS_bundle-like_dom_sf"/>
</dbReference>
<dbReference type="InterPro" id="IPR008591">
    <property type="entry name" value="GINS_Sld5"/>
</dbReference>
<dbReference type="InterPro" id="IPR031633">
    <property type="entry name" value="SLD5_C"/>
</dbReference>
<dbReference type="InterPro" id="IPR038749">
    <property type="entry name" value="Sld5_GINS_A"/>
</dbReference>
<dbReference type="PANTHER" id="PTHR21206:SF0">
    <property type="entry name" value="DNA REPLICATION COMPLEX GINS PROTEIN SLD5"/>
    <property type="match status" value="1"/>
</dbReference>
<dbReference type="PANTHER" id="PTHR21206">
    <property type="entry name" value="SLD5 PROTEIN"/>
    <property type="match status" value="1"/>
</dbReference>
<dbReference type="Pfam" id="PF05916">
    <property type="entry name" value="Sld5"/>
    <property type="match status" value="1"/>
</dbReference>
<dbReference type="Pfam" id="PF16922">
    <property type="entry name" value="SLD5_C"/>
    <property type="match status" value="1"/>
</dbReference>
<dbReference type="PIRSF" id="PIRSF007764">
    <property type="entry name" value="Sld5"/>
    <property type="match status" value="1"/>
</dbReference>
<dbReference type="SUPFAM" id="SSF158573">
    <property type="entry name" value="GINS helical bundle-like"/>
    <property type="match status" value="1"/>
</dbReference>
<comment type="function">
    <text evidence="1">The GINS complex plays an essential role in the initiation of DNA replication. Has a role in chromosome segregation (By similarity).</text>
</comment>
<comment type="subunit">
    <text evidence="1">Component of the GINS complex which is a heterotetramer of SLD5, PSF1, PSF2 and PSF3.</text>
</comment>
<comment type="subcellular location">
    <subcellularLocation>
        <location evidence="1">Nucleus</location>
    </subcellularLocation>
</comment>
<comment type="similarity">
    <text evidence="2">Belongs to the GINS4/SLD5 family.</text>
</comment>
<evidence type="ECO:0000250" key="1"/>
<evidence type="ECO:0000305" key="2"/>
<reference key="1">
    <citation type="journal article" date="2015" name="Genome Announc.">
        <title>Draft genome sequence of the cellulolytic fungus Chaetomium globosum.</title>
        <authorList>
            <person name="Cuomo C.A."/>
            <person name="Untereiner W.A."/>
            <person name="Ma L.-J."/>
            <person name="Grabherr M."/>
            <person name="Birren B.W."/>
        </authorList>
    </citation>
    <scope>NUCLEOTIDE SEQUENCE [LARGE SCALE GENOMIC DNA]</scope>
    <source>
        <strain>ATCC 6205 / CBS 148.51 / DSM 1962 / NBRC 6347 / NRRL 1970</strain>
    </source>
</reference>
<name>SLD5_CHAGB</name>
<keyword id="KW-0159">Chromosome partition</keyword>
<keyword id="KW-0235">DNA replication</keyword>
<keyword id="KW-0539">Nucleus</keyword>
<keyword id="KW-1185">Reference proteome</keyword>